<organism>
    <name type="scientific">Mus musculus</name>
    <name type="common">Mouse</name>
    <dbReference type="NCBI Taxonomy" id="10090"/>
    <lineage>
        <taxon>Eukaryota</taxon>
        <taxon>Metazoa</taxon>
        <taxon>Chordata</taxon>
        <taxon>Craniata</taxon>
        <taxon>Vertebrata</taxon>
        <taxon>Euteleostomi</taxon>
        <taxon>Mammalia</taxon>
        <taxon>Eutheria</taxon>
        <taxon>Euarchontoglires</taxon>
        <taxon>Glires</taxon>
        <taxon>Rodentia</taxon>
        <taxon>Myomorpha</taxon>
        <taxon>Muroidea</taxon>
        <taxon>Muridae</taxon>
        <taxon>Murinae</taxon>
        <taxon>Mus</taxon>
        <taxon>Mus</taxon>
    </lineage>
</organism>
<evidence type="ECO:0000255" key="1"/>
<evidence type="ECO:0000255" key="2">
    <source>
        <dbReference type="PROSITE-ProRule" id="PRU00521"/>
    </source>
</evidence>
<evidence type="ECO:0000269" key="3">
    <source>
    </source>
</evidence>
<evidence type="ECO:0000269" key="4">
    <source>
    </source>
</evidence>
<keyword id="KW-1003">Cell membrane</keyword>
<keyword id="KW-1015">Disulfide bond</keyword>
<keyword id="KW-0297">G-protein coupled receptor</keyword>
<keyword id="KW-0325">Glycoprotein</keyword>
<keyword id="KW-0472">Membrane</keyword>
<keyword id="KW-0675">Receptor</keyword>
<keyword id="KW-1185">Reference proteome</keyword>
<keyword id="KW-0807">Transducer</keyword>
<keyword id="KW-0812">Transmembrane</keyword>
<keyword id="KW-1133">Transmembrane helix</keyword>
<gene>
    <name type="primary">Trhr</name>
</gene>
<proteinExistence type="evidence at transcript level"/>
<comment type="function">
    <text evidence="3 4">Receptor for thyrotropin-releasing hormone (TRH). Upon ligand binding, this G-protein-coupled receptor triggers activation of the phosphatidylinositol (IP3)-calcium-protein kinase C (PKC) pathway.</text>
</comment>
<comment type="subcellular location">
    <subcellularLocation>
        <location evidence="3 4">Cell membrane</location>
        <topology evidence="1">Multi-pass membrane protein</topology>
    </subcellularLocation>
</comment>
<comment type="similarity">
    <text evidence="2">Belongs to the G-protein coupled receptor 1 family.</text>
</comment>
<name>TRHR_MOUSE</name>
<sequence>MENDTVSEMNQTELQPQAAVALEYQVVTILLVVIICGLGIVGNIMVVLVVMRTKHMRTPTNCYLVSLAVADLMVLVAAGLPNITDSIYGSWVYGYVGCLCITYLQYLGINASSCSITAFTIERYIAICHPIKAQFLCTFSRAKKIIIFVWAFTSIYCMLWFFLLDLNISTYKNAVVVSCGYKISRNYYSPIYLMDFGVFYVVPMILATVLYGFIARILFLNPIPSDPKENSKMWKNDSIHQNKNLNLNATNRCFNSTVSSRKQVTKMLAVVVILFALLWMPYRTLVVVNSFLSSPFQENWFLLFCRICIYLNSAINPVIYNLMSQKFRAAFRKLCNCKQKPTEKAANYSVALNYSVIKESDRFSTELEDITVTDTYVSTTKVSFDDTCLASEN</sequence>
<dbReference type="EMBL" id="M59811">
    <property type="protein sequence ID" value="AAA40480.1"/>
    <property type="molecule type" value="mRNA"/>
</dbReference>
<dbReference type="EMBL" id="M94384">
    <property type="protein sequence ID" value="AAA40437.1"/>
    <property type="molecule type" value="mRNA"/>
</dbReference>
<dbReference type="EMBL" id="L48936">
    <property type="protein sequence ID" value="AAA81559.1"/>
    <property type="molecule type" value="mRNA"/>
</dbReference>
<dbReference type="CCDS" id="CCDS37068.1"/>
<dbReference type="PIR" id="A39251">
    <property type="entry name" value="A39251"/>
</dbReference>
<dbReference type="RefSeq" id="NP_038724.1">
    <property type="nucleotide sequence ID" value="NM_013696.2"/>
</dbReference>
<dbReference type="SMR" id="P21761"/>
<dbReference type="CORUM" id="P21761"/>
<dbReference type="FunCoup" id="P21761">
    <property type="interactions" value="638"/>
</dbReference>
<dbReference type="STRING" id="10090.ENSMUSP00000036320"/>
<dbReference type="BindingDB" id="P21761"/>
<dbReference type="ChEMBL" id="CHEMBL2467"/>
<dbReference type="DrugCentral" id="P21761"/>
<dbReference type="GuidetoPHARMACOLOGY" id="363"/>
<dbReference type="GlyCosmos" id="P21761">
    <property type="glycosylation" value="2 sites, No reported glycans"/>
</dbReference>
<dbReference type="GlyGen" id="P21761">
    <property type="glycosylation" value="3 sites, 1 N-linked glycan (1 site)"/>
</dbReference>
<dbReference type="iPTMnet" id="P21761"/>
<dbReference type="PhosphoSitePlus" id="P21761"/>
<dbReference type="SwissPalm" id="P21761"/>
<dbReference type="PaxDb" id="10090-ENSMUSP00000036320"/>
<dbReference type="ProteomicsDB" id="298291"/>
<dbReference type="Antibodypedia" id="13449">
    <property type="antibodies" value="302 antibodies from 31 providers"/>
</dbReference>
<dbReference type="DNASU" id="22045"/>
<dbReference type="Ensembl" id="ENSMUST00000038856.14">
    <property type="protein sequence ID" value="ENSMUSP00000036320.7"/>
    <property type="gene ID" value="ENSMUSG00000038760.15"/>
</dbReference>
<dbReference type="Ensembl" id="ENSMUST00000110289.4">
    <property type="protein sequence ID" value="ENSMUSP00000105918.4"/>
    <property type="gene ID" value="ENSMUSG00000038760.15"/>
</dbReference>
<dbReference type="Ensembl" id="ENSMUST00000226626.2">
    <property type="protein sequence ID" value="ENSMUSP00000154650.2"/>
    <property type="gene ID" value="ENSMUSG00000038760.15"/>
</dbReference>
<dbReference type="GeneID" id="22045"/>
<dbReference type="KEGG" id="mmu:22045"/>
<dbReference type="UCSC" id="uc007vpo.1">
    <property type="organism name" value="mouse"/>
</dbReference>
<dbReference type="AGR" id="MGI:98824"/>
<dbReference type="CTD" id="7201"/>
<dbReference type="MGI" id="MGI:98824">
    <property type="gene designation" value="Trhr"/>
</dbReference>
<dbReference type="VEuPathDB" id="HostDB:ENSMUSG00000038760"/>
<dbReference type="eggNOG" id="KOG3656">
    <property type="taxonomic scope" value="Eukaryota"/>
</dbReference>
<dbReference type="GeneTree" id="ENSGT01120000271846"/>
<dbReference type="HOGENOM" id="CLU_009579_6_5_1"/>
<dbReference type="InParanoid" id="P21761"/>
<dbReference type="OMA" id="NCKQKPA"/>
<dbReference type="OrthoDB" id="10036964at2759"/>
<dbReference type="PhylomeDB" id="P21761"/>
<dbReference type="TreeFam" id="TF326170"/>
<dbReference type="Reactome" id="R-MMU-375276">
    <property type="pathway name" value="Peptide ligand-binding receptors"/>
</dbReference>
<dbReference type="Reactome" id="R-MMU-416476">
    <property type="pathway name" value="G alpha (q) signalling events"/>
</dbReference>
<dbReference type="BioGRID-ORCS" id="22045">
    <property type="hits" value="3 hits in 76 CRISPR screens"/>
</dbReference>
<dbReference type="PRO" id="PR:P21761"/>
<dbReference type="Proteomes" id="UP000000589">
    <property type="component" value="Chromosome 15"/>
</dbReference>
<dbReference type="RNAct" id="P21761">
    <property type="molecule type" value="protein"/>
</dbReference>
<dbReference type="Bgee" id="ENSMUSG00000038760">
    <property type="expression patterns" value="Expressed in facial nucleus and 59 other cell types or tissues"/>
</dbReference>
<dbReference type="ExpressionAtlas" id="P21761">
    <property type="expression patterns" value="baseline and differential"/>
</dbReference>
<dbReference type="GO" id="GO:0005886">
    <property type="term" value="C:plasma membrane"/>
    <property type="evidence" value="ECO:0007669"/>
    <property type="project" value="UniProtKB-SubCell"/>
</dbReference>
<dbReference type="GO" id="GO:0004997">
    <property type="term" value="F:thyrotropin-releasing hormone receptor activity"/>
    <property type="evidence" value="ECO:0007669"/>
    <property type="project" value="InterPro"/>
</dbReference>
<dbReference type="CDD" id="cd14995">
    <property type="entry name" value="7tmA_TRH-R"/>
    <property type="match status" value="1"/>
</dbReference>
<dbReference type="FunFam" id="1.20.1070.10:FF:000186">
    <property type="entry name" value="thyrotropin-releasing hormone receptor"/>
    <property type="match status" value="1"/>
</dbReference>
<dbReference type="Gene3D" id="1.20.1070.10">
    <property type="entry name" value="Rhodopsin 7-helix transmembrane proteins"/>
    <property type="match status" value="1"/>
</dbReference>
<dbReference type="InterPro" id="IPR000276">
    <property type="entry name" value="GPCR_Rhodpsn"/>
</dbReference>
<dbReference type="InterPro" id="IPR017452">
    <property type="entry name" value="GPCR_Rhodpsn_7TM"/>
</dbReference>
<dbReference type="InterPro" id="IPR002120">
    <property type="entry name" value="TRH_rcpt_1"/>
</dbReference>
<dbReference type="PANTHER" id="PTHR46061">
    <property type="entry name" value="THYROTROPIN-RELEASING HORMONE RECEPTOR"/>
    <property type="match status" value="1"/>
</dbReference>
<dbReference type="PANTHER" id="PTHR46061:SF2">
    <property type="entry name" value="THYROTROPIN-RELEASING HORMONE RECEPTOR"/>
    <property type="match status" value="1"/>
</dbReference>
<dbReference type="Pfam" id="PF00001">
    <property type="entry name" value="7tm_1"/>
    <property type="match status" value="1"/>
</dbReference>
<dbReference type="PRINTS" id="PR00237">
    <property type="entry name" value="GPCRRHODOPSN"/>
</dbReference>
<dbReference type="PRINTS" id="PR00751">
    <property type="entry name" value="THYROLIBRINR"/>
</dbReference>
<dbReference type="PRINTS" id="PR01846">
    <property type="entry name" value="TRHRFAMILY"/>
</dbReference>
<dbReference type="SMART" id="SM01381">
    <property type="entry name" value="7TM_GPCR_Srsx"/>
    <property type="match status" value="1"/>
</dbReference>
<dbReference type="SUPFAM" id="SSF81321">
    <property type="entry name" value="Family A G protein-coupled receptor-like"/>
    <property type="match status" value="1"/>
</dbReference>
<dbReference type="PROSITE" id="PS00237">
    <property type="entry name" value="G_PROTEIN_RECEP_F1_1"/>
    <property type="match status" value="1"/>
</dbReference>
<dbReference type="PROSITE" id="PS50262">
    <property type="entry name" value="G_PROTEIN_RECEP_F1_2"/>
    <property type="match status" value="1"/>
</dbReference>
<accession>P21761</accession>
<protein>
    <recommendedName>
        <fullName>Thyrotropin-releasing hormone receptor</fullName>
        <shortName>TRH-R</shortName>
    </recommendedName>
    <alternativeName>
        <fullName>Thyroliberin receptor</fullName>
    </alternativeName>
</protein>
<feature type="chain" id="PRO_0000070188" description="Thyrotropin-releasing hormone receptor">
    <location>
        <begin position="1"/>
        <end position="393"/>
    </location>
</feature>
<feature type="topological domain" description="Extracellular" evidence="1">
    <location>
        <begin position="1"/>
        <end position="28"/>
    </location>
</feature>
<feature type="transmembrane region" description="Helical; Name=1" evidence="1">
    <location>
        <begin position="29"/>
        <end position="51"/>
    </location>
</feature>
<feature type="topological domain" description="Cytoplasmic" evidence="1">
    <location>
        <begin position="52"/>
        <end position="61"/>
    </location>
</feature>
<feature type="transmembrane region" description="Helical; Name=2" evidence="1">
    <location>
        <begin position="62"/>
        <end position="83"/>
    </location>
</feature>
<feature type="topological domain" description="Extracellular" evidence="1">
    <location>
        <begin position="84"/>
        <end position="99"/>
    </location>
</feature>
<feature type="transmembrane region" description="Helical; Name=3" evidence="1">
    <location>
        <begin position="100"/>
        <end position="121"/>
    </location>
</feature>
<feature type="topological domain" description="Cytoplasmic" evidence="1">
    <location>
        <begin position="122"/>
        <end position="144"/>
    </location>
</feature>
<feature type="transmembrane region" description="Helical; Name=4" evidence="1">
    <location>
        <begin position="145"/>
        <end position="168"/>
    </location>
</feature>
<feature type="topological domain" description="Extracellular" evidence="1">
    <location>
        <begin position="169"/>
        <end position="193"/>
    </location>
</feature>
<feature type="transmembrane region" description="Helical; Name=5" evidence="1">
    <location>
        <begin position="194"/>
        <end position="215"/>
    </location>
</feature>
<feature type="topological domain" description="Cytoplasmic" evidence="1">
    <location>
        <begin position="216"/>
        <end position="266"/>
    </location>
</feature>
<feature type="transmembrane region" description="Helical; Name=6" evidence="1">
    <location>
        <begin position="267"/>
        <end position="288"/>
    </location>
</feature>
<feature type="topological domain" description="Extracellular" evidence="1">
    <location>
        <begin position="289"/>
        <end position="296"/>
    </location>
</feature>
<feature type="transmembrane region" description="Helical; Name=7" evidence="1">
    <location>
        <begin position="297"/>
        <end position="319"/>
    </location>
</feature>
<feature type="topological domain" description="Cytoplasmic" evidence="1">
    <location>
        <begin position="320"/>
        <end position="393"/>
    </location>
</feature>
<feature type="glycosylation site" description="N-linked (GlcNAc...) asparagine" evidence="1">
    <location>
        <position position="3"/>
    </location>
</feature>
<feature type="glycosylation site" description="N-linked (GlcNAc...) asparagine" evidence="1">
    <location>
        <position position="10"/>
    </location>
</feature>
<feature type="disulfide bond" evidence="2">
    <location>
        <begin position="98"/>
        <end position="179"/>
    </location>
</feature>
<reference key="1">
    <citation type="journal article" date="1990" name="Proc. Natl. Acad. Sci. U.S.A.">
        <title>Expression cloning of a cDNA encoding the mouse pituitary thyrotropin-releasing hormone receptor.</title>
        <authorList>
            <person name="Straub R.E."/>
            <person name="Frech G.C."/>
            <person name="Joho R.H."/>
            <person name="Gershengorn M.C."/>
        </authorList>
    </citation>
    <scope>NUCLEOTIDE SEQUENCE [MRNA]</scope>
    <scope>FUNCTION</scope>
    <scope>SUBCELLULAR LOCATION</scope>
    <source>
        <tissue>Pituitary</tissue>
    </source>
</reference>
<reference key="2">
    <citation type="journal article" date="1992" name="J. Biol. Chem.">
        <title>Regulation by thyrotropin-releasing hormone (TRH) of TRH receptor mRNA degradation in rat pituitary GH3 cells.</title>
        <authorList>
            <person name="Narayanan C.S."/>
            <person name="Fujimoto J."/>
            <person name="Geras-Raaka E."/>
            <person name="Gershengorn M.C."/>
        </authorList>
    </citation>
    <scope>NUCLEOTIDE SEQUENCE [MRNA]</scope>
</reference>
<reference key="3">
    <citation type="journal article" date="1996" name="J. Mol. Endocrinol.">
        <title>An alternative splice variant of the mouse TRH receptor mRNA is the major form expressed in the mouse pituitary gland.</title>
        <authorList>
            <person name="Jones K.E."/>
            <person name="Brubaker J.H."/>
            <person name="Chin W.W."/>
        </authorList>
    </citation>
    <scope>NUCLEOTIDE SEQUENCE [MRNA] OF 332-393</scope>
    <source>
        <tissue>Pituitary</tissue>
    </source>
</reference>
<reference key="4">
    <citation type="journal article" date="2001" name="Endocrinology">
        <title>Regulator of G protein signaling 4 suppresses basal and thyrotropin releasing-hormone (TRH)-stimulated signaling by two mouse TRH receptors, TRH-R(1) and TRH-R(2).</title>
        <authorList>
            <person name="Harder S."/>
            <person name="Lu X."/>
            <person name="Wang W."/>
            <person name="Buck F."/>
            <person name="Gershengorn M.C."/>
            <person name="Bruhn T.O."/>
        </authorList>
    </citation>
    <scope>FUNCTION</scope>
    <scope>SUBCELLULAR LOCATION</scope>
</reference>